<organism>
    <name type="scientific">Helicobacter hepaticus (strain ATCC 51449 / 3B1)</name>
    <dbReference type="NCBI Taxonomy" id="235279"/>
    <lineage>
        <taxon>Bacteria</taxon>
        <taxon>Pseudomonadati</taxon>
        <taxon>Campylobacterota</taxon>
        <taxon>Epsilonproteobacteria</taxon>
        <taxon>Campylobacterales</taxon>
        <taxon>Helicobacteraceae</taxon>
        <taxon>Helicobacter</taxon>
    </lineage>
</organism>
<comment type="function">
    <text evidence="1">One of the essential components for the initiation of protein synthesis. Stabilizes the binding of IF-2 and IF-3 on the 30S subunit to which N-formylmethionyl-tRNA(fMet) subsequently binds. Helps modulate mRNA selection, yielding the 30S pre-initiation complex (PIC). Upon addition of the 50S ribosomal subunit IF-1, IF-2 and IF-3 are released leaving the mature 70S translation initiation complex.</text>
</comment>
<comment type="subunit">
    <text evidence="1">Component of the 30S ribosomal translation pre-initiation complex which assembles on the 30S ribosome in the order IF-2 and IF-3, IF-1 and N-formylmethionyl-tRNA(fMet); mRNA recruitment can occur at any time during PIC assembly.</text>
</comment>
<comment type="subcellular location">
    <subcellularLocation>
        <location evidence="1">Cytoplasm</location>
    </subcellularLocation>
</comment>
<comment type="similarity">
    <text evidence="1">Belongs to the IF-1 family.</text>
</comment>
<proteinExistence type="inferred from homology"/>
<evidence type="ECO:0000255" key="1">
    <source>
        <dbReference type="HAMAP-Rule" id="MF_00075"/>
    </source>
</evidence>
<accession>Q7VGC3</accession>
<feature type="chain" id="PRO_0000095798" description="Translation initiation factor IF-1">
    <location>
        <begin position="1"/>
        <end position="72"/>
    </location>
</feature>
<feature type="domain" description="S1-like" evidence="1">
    <location>
        <begin position="1"/>
        <end position="72"/>
    </location>
</feature>
<name>IF1_HELHP</name>
<dbReference type="EMBL" id="AE017125">
    <property type="protein sequence ID" value="AAP77996.1"/>
    <property type="molecule type" value="Genomic_DNA"/>
</dbReference>
<dbReference type="RefSeq" id="WP_011116239.1">
    <property type="nucleotide sequence ID" value="NC_004917.1"/>
</dbReference>
<dbReference type="SMR" id="Q7VGC3"/>
<dbReference type="STRING" id="235279.HH_1399"/>
<dbReference type="GeneID" id="82321527"/>
<dbReference type="KEGG" id="hhe:HH_1399"/>
<dbReference type="eggNOG" id="COG0361">
    <property type="taxonomic scope" value="Bacteria"/>
</dbReference>
<dbReference type="HOGENOM" id="CLU_151267_1_0_7"/>
<dbReference type="OrthoDB" id="9803250at2"/>
<dbReference type="Proteomes" id="UP000002495">
    <property type="component" value="Chromosome"/>
</dbReference>
<dbReference type="GO" id="GO:0005829">
    <property type="term" value="C:cytosol"/>
    <property type="evidence" value="ECO:0007669"/>
    <property type="project" value="TreeGrafter"/>
</dbReference>
<dbReference type="GO" id="GO:0043022">
    <property type="term" value="F:ribosome binding"/>
    <property type="evidence" value="ECO:0007669"/>
    <property type="project" value="UniProtKB-UniRule"/>
</dbReference>
<dbReference type="GO" id="GO:0019843">
    <property type="term" value="F:rRNA binding"/>
    <property type="evidence" value="ECO:0007669"/>
    <property type="project" value="UniProtKB-UniRule"/>
</dbReference>
<dbReference type="GO" id="GO:0003743">
    <property type="term" value="F:translation initiation factor activity"/>
    <property type="evidence" value="ECO:0007669"/>
    <property type="project" value="UniProtKB-UniRule"/>
</dbReference>
<dbReference type="CDD" id="cd04451">
    <property type="entry name" value="S1_IF1"/>
    <property type="match status" value="1"/>
</dbReference>
<dbReference type="FunFam" id="2.40.50.140:FF:000002">
    <property type="entry name" value="Translation initiation factor IF-1"/>
    <property type="match status" value="1"/>
</dbReference>
<dbReference type="Gene3D" id="2.40.50.140">
    <property type="entry name" value="Nucleic acid-binding proteins"/>
    <property type="match status" value="1"/>
</dbReference>
<dbReference type="HAMAP" id="MF_00075">
    <property type="entry name" value="IF_1"/>
    <property type="match status" value="1"/>
</dbReference>
<dbReference type="InterPro" id="IPR012340">
    <property type="entry name" value="NA-bd_OB-fold"/>
</dbReference>
<dbReference type="InterPro" id="IPR006196">
    <property type="entry name" value="RNA-binding_domain_S1_IF1"/>
</dbReference>
<dbReference type="InterPro" id="IPR003029">
    <property type="entry name" value="S1_domain"/>
</dbReference>
<dbReference type="InterPro" id="IPR004368">
    <property type="entry name" value="TIF_IF1"/>
</dbReference>
<dbReference type="NCBIfam" id="TIGR00008">
    <property type="entry name" value="infA"/>
    <property type="match status" value="1"/>
</dbReference>
<dbReference type="PANTHER" id="PTHR33370">
    <property type="entry name" value="TRANSLATION INITIATION FACTOR IF-1, CHLOROPLASTIC"/>
    <property type="match status" value="1"/>
</dbReference>
<dbReference type="PANTHER" id="PTHR33370:SF1">
    <property type="entry name" value="TRANSLATION INITIATION FACTOR IF-1, CHLOROPLASTIC"/>
    <property type="match status" value="1"/>
</dbReference>
<dbReference type="Pfam" id="PF01176">
    <property type="entry name" value="eIF-1a"/>
    <property type="match status" value="1"/>
</dbReference>
<dbReference type="SMART" id="SM00316">
    <property type="entry name" value="S1"/>
    <property type="match status" value="1"/>
</dbReference>
<dbReference type="SUPFAM" id="SSF50249">
    <property type="entry name" value="Nucleic acid-binding proteins"/>
    <property type="match status" value="1"/>
</dbReference>
<dbReference type="PROSITE" id="PS50832">
    <property type="entry name" value="S1_IF1_TYPE"/>
    <property type="match status" value="1"/>
</dbReference>
<sequence>MAKDDVIEVDGKVIEALPNATFRVQLENGHIVLCHIAGKMRMHYIKILPGDMVKIELTPYSLDKGRITYRHK</sequence>
<protein>
    <recommendedName>
        <fullName evidence="1">Translation initiation factor IF-1</fullName>
    </recommendedName>
</protein>
<reference key="1">
    <citation type="journal article" date="2003" name="Proc. Natl. Acad. Sci. U.S.A.">
        <title>The complete genome sequence of the carcinogenic bacterium Helicobacter hepaticus.</title>
        <authorList>
            <person name="Suerbaum S."/>
            <person name="Josenhans C."/>
            <person name="Sterzenbach T."/>
            <person name="Drescher B."/>
            <person name="Brandt P."/>
            <person name="Bell M."/>
            <person name="Droege M."/>
            <person name="Fartmann B."/>
            <person name="Fischer H.-P."/>
            <person name="Ge Z."/>
            <person name="Hoerster A."/>
            <person name="Holland R."/>
            <person name="Klein K."/>
            <person name="Koenig J."/>
            <person name="Macko L."/>
            <person name="Mendz G.L."/>
            <person name="Nyakatura G."/>
            <person name="Schauer D.B."/>
            <person name="Shen Z."/>
            <person name="Weber J."/>
            <person name="Frosch M."/>
            <person name="Fox J.G."/>
        </authorList>
    </citation>
    <scope>NUCLEOTIDE SEQUENCE [LARGE SCALE GENOMIC DNA]</scope>
    <source>
        <strain>ATCC 51449 / 3B1</strain>
    </source>
</reference>
<gene>
    <name evidence="1" type="primary">infA</name>
    <name type="ordered locus">HH_1399</name>
</gene>
<keyword id="KW-0963">Cytoplasm</keyword>
<keyword id="KW-0396">Initiation factor</keyword>
<keyword id="KW-0648">Protein biosynthesis</keyword>
<keyword id="KW-1185">Reference proteome</keyword>
<keyword id="KW-0694">RNA-binding</keyword>
<keyword id="KW-0699">rRNA-binding</keyword>